<sequence>MKKIVVLLGMLLAPWFSSAVQAKGEAGEFDYYAMALSWSPEHCAIKPADRDQCSRQLGFVLHGLWPQYQRGYPSSCTRERLDPAMEQEFAGLYPSRFLYRHEWEKHGTCSGLSQHDFHQLASDLRQKREDPGRLSVSCRAAAQKPLPAQGGSGQCQRLAGPGQHHGGLRRRWRFLREVYICLNKEGTDAVTCSDEMQKRELPSCGQPDFLLRTVR</sequence>
<accession>Q07465</accession>
<name>RNI_AERHY</name>
<protein>
    <recommendedName>
        <fullName evidence="5">Ribonuclease</fullName>
        <ecNumber evidence="4">3.1.27.-</ecNumber>
    </recommendedName>
</protein>
<keyword id="KW-0963">Cytoplasm</keyword>
<keyword id="KW-0255">Endonuclease</keyword>
<keyword id="KW-0378">Hydrolase</keyword>
<keyword id="KW-0540">Nuclease</keyword>
<keyword id="KW-0574">Periplasm</keyword>
<keyword id="KW-0732">Signal</keyword>
<reference key="1">
    <citation type="journal article" date="1993" name="J. Bacteriol.">
        <title>Relatedness of a periplasmic, broad-specificity RNase from Aeromonas hydrophila to RNase I of Escherichia coli and to a family of eukaryotic RNases.</title>
        <authorList>
            <person name="Favre D."/>
            <person name="Ngai P.K."/>
            <person name="Timmis K.N."/>
        </authorList>
    </citation>
    <scope>NUCLEOTIDE SEQUENCE [GENOMIC DNA]</scope>
    <scope>FUNCTION</scope>
    <scope>CATALYTIC ACTIVITY</scope>
    <scope>BIOPHYSICOCHEMICAL PROPERTIES</scope>
    <scope>SUBCELLULAR LOCATION</scope>
    <source>
        <strain>Ah1133</strain>
    </source>
</reference>
<evidence type="ECO:0000250" key="1">
    <source>
        <dbReference type="UniProtKB" id="P08056"/>
    </source>
</evidence>
<evidence type="ECO:0000255" key="2"/>
<evidence type="ECO:0000256" key="3">
    <source>
        <dbReference type="SAM" id="MobiDB-lite"/>
    </source>
</evidence>
<evidence type="ECO:0000269" key="4">
    <source>
    </source>
</evidence>
<evidence type="ECO:0000305" key="5"/>
<comment type="function">
    <text evidence="4">One of the few RNases that cleave the phosphodiester bond between any two nucleotide. Shows a preference for adenylic acid.</text>
</comment>
<comment type="biophysicochemical properties">
    <kinetics>
        <KM evidence="4">0.4 mM for ApA (periplasmic form)</KM>
        <KM evidence="4">0.08 mM for ApA (cytoplasmic form)</KM>
        <KM evidence="4">0.8 mM for GpA (periplasmic form)</KM>
        <KM evidence="4">0.2 mM for GpA (cytoplasmic form)</KM>
        <KM evidence="4">1 mM for CpA (periplasmic form)</KM>
        <KM evidence="4">0.2 mM for CpA (cytoplasmic form)</KM>
        <KM evidence="4">1 mM for UpA (periplasmic form)</KM>
        <KM evidence="4">0.3 mM for UpA (cytoplasmic form)</KM>
    </kinetics>
</comment>
<comment type="subcellular location">
    <subcellularLocation>
        <location evidence="4">Periplasm</location>
    </subcellularLocation>
    <subcellularLocation>
        <location evidence="4">Cytoplasm</location>
    </subcellularLocation>
    <text evidence="4">An RNase I-like form (periplasmic) and RNase I*-like form (cytoplasmic) appear to be isoforms apparently encoded by the same gene. The cytoplasmic form is less active towards natural polymer RNA.</text>
</comment>
<comment type="similarity">
    <text evidence="5">Belongs to the RNase T2 family.</text>
</comment>
<feature type="signal peptide" evidence="2">
    <location>
        <begin position="1"/>
        <end position="22"/>
    </location>
</feature>
<feature type="chain" id="PRO_0000030962" description="Ribonuclease">
    <location>
        <begin position="23"/>
        <end position="215"/>
    </location>
</feature>
<feature type="region of interest" description="Disordered" evidence="3">
    <location>
        <begin position="144"/>
        <end position="166"/>
    </location>
</feature>
<feature type="active site" evidence="1">
    <location>
        <position position="62"/>
    </location>
</feature>
<feature type="active site" evidence="1">
    <location>
        <position position="102"/>
    </location>
</feature>
<feature type="active site" evidence="1">
    <location>
        <position position="106"/>
    </location>
</feature>
<proteinExistence type="evidence at protein level"/>
<organism>
    <name type="scientific">Aeromonas hydrophila</name>
    <dbReference type="NCBI Taxonomy" id="644"/>
    <lineage>
        <taxon>Bacteria</taxon>
        <taxon>Pseudomonadati</taxon>
        <taxon>Pseudomonadota</taxon>
        <taxon>Gammaproteobacteria</taxon>
        <taxon>Aeromonadales</taxon>
        <taxon>Aeromonadaceae</taxon>
        <taxon>Aeromonas</taxon>
    </lineage>
</organism>
<dbReference type="EC" id="3.1.27.-" evidence="4"/>
<dbReference type="EMBL" id="X67054">
    <property type="protein sequence ID" value="CAA47438.1"/>
    <property type="molecule type" value="Genomic_DNA"/>
</dbReference>
<dbReference type="PIR" id="A47118">
    <property type="entry name" value="A47118"/>
</dbReference>
<dbReference type="SMR" id="Q07465"/>
<dbReference type="SABIO-RK" id="Q07465"/>
<dbReference type="GO" id="GO:0005737">
    <property type="term" value="C:cytoplasm"/>
    <property type="evidence" value="ECO:0007669"/>
    <property type="project" value="UniProtKB-SubCell"/>
</dbReference>
<dbReference type="GO" id="GO:0042597">
    <property type="term" value="C:periplasmic space"/>
    <property type="evidence" value="ECO:0007669"/>
    <property type="project" value="UniProtKB-SubCell"/>
</dbReference>
<dbReference type="GO" id="GO:0033897">
    <property type="term" value="F:ribonuclease T2 activity"/>
    <property type="evidence" value="ECO:0007669"/>
    <property type="project" value="InterPro"/>
</dbReference>
<dbReference type="GO" id="GO:0003723">
    <property type="term" value="F:RNA binding"/>
    <property type="evidence" value="ECO:0007669"/>
    <property type="project" value="InterPro"/>
</dbReference>
<dbReference type="GO" id="GO:0006401">
    <property type="term" value="P:RNA catabolic process"/>
    <property type="evidence" value="ECO:0007669"/>
    <property type="project" value="UniProtKB-ARBA"/>
</dbReference>
<dbReference type="Gene3D" id="3.90.730.10">
    <property type="entry name" value="Ribonuclease T2-like"/>
    <property type="match status" value="1"/>
</dbReference>
<dbReference type="InterPro" id="IPR001568">
    <property type="entry name" value="RNase_T2-like"/>
</dbReference>
<dbReference type="InterPro" id="IPR036430">
    <property type="entry name" value="RNase_T2-like_sf"/>
</dbReference>
<dbReference type="InterPro" id="IPR018188">
    <property type="entry name" value="RNase_T2_His_AS_1"/>
</dbReference>
<dbReference type="InterPro" id="IPR033130">
    <property type="entry name" value="RNase_T2_His_AS_2"/>
</dbReference>
<dbReference type="PANTHER" id="PTHR11240">
    <property type="entry name" value="RIBONUCLEASE T2"/>
    <property type="match status" value="1"/>
</dbReference>
<dbReference type="PANTHER" id="PTHR11240:SF22">
    <property type="entry name" value="RIBONUCLEASE T2"/>
    <property type="match status" value="1"/>
</dbReference>
<dbReference type="Pfam" id="PF00445">
    <property type="entry name" value="Ribonuclease_T2"/>
    <property type="match status" value="1"/>
</dbReference>
<dbReference type="SUPFAM" id="SSF55895">
    <property type="entry name" value="Ribonuclease Rh-like"/>
    <property type="match status" value="1"/>
</dbReference>
<dbReference type="PROSITE" id="PS00530">
    <property type="entry name" value="RNASE_T2_1"/>
    <property type="match status" value="1"/>
</dbReference>
<dbReference type="PROSITE" id="PS00531">
    <property type="entry name" value="RNASE_T2_2"/>
    <property type="match status" value="1"/>
</dbReference>